<accession>P13391</accession>
<gene>
    <name type="primary">gh</name>
</gene>
<evidence type="ECO:0000250" key="1"/>
<evidence type="ECO:0000305" key="2"/>
<reference key="1">
    <citation type="journal article" date="1989" name="DNA">
        <title>Tilapia growth hormone: molecular cloning of cDNA and expression in Escherichia coli.</title>
        <authorList>
            <person name="Rentier-Delrue F."/>
            <person name="Swennen D."/>
            <person name="Philippart J.C."/>
            <person name="L'Hoir C."/>
            <person name="Lion M."/>
            <person name="Benrubi O."/>
            <person name="Martial J.A."/>
        </authorList>
    </citation>
    <scope>NUCLEOTIDE SEQUENCE [MRNA]</scope>
</reference>
<reference key="2">
    <citation type="journal article" date="1992" name="Gene">
        <title>Structure and sequence of the growth hormone-encoding gene from Tilapia nilotica.</title>
        <authorList>
            <person name="Ber R."/>
            <person name="Daniel V."/>
        </authorList>
    </citation>
    <scope>NUCLEOTIDE SEQUENCE [GENOMIC DNA]</scope>
</reference>
<reference key="3">
    <citation type="journal article" date="1993" name="Gene">
        <title>Sequence analysis suggests a recent duplication of the growth hormone-encoding gene in Tilapia nilotica.</title>
        <authorList>
            <person name="Ber R."/>
            <person name="Daniel V."/>
        </authorList>
    </citation>
    <scope>NUCLEOTIDE SEQUENCE [GENOMIC DNA]</scope>
</reference>
<dbReference type="EMBL" id="M26916">
    <property type="protein sequence ID" value="AAA49437.1"/>
    <property type="molecule type" value="mRNA"/>
</dbReference>
<dbReference type="EMBL" id="M84774">
    <property type="protein sequence ID" value="AAA49626.1"/>
    <property type="molecule type" value="Genomic_DNA"/>
</dbReference>
<dbReference type="PIR" id="JN0484">
    <property type="entry name" value="JN0484"/>
</dbReference>
<dbReference type="SMR" id="P13391"/>
<dbReference type="FunCoup" id="P13391">
    <property type="interactions" value="1945"/>
</dbReference>
<dbReference type="STRING" id="8128.ENSONIP00000011557"/>
<dbReference type="eggNOG" id="ENOG502R5GJ">
    <property type="taxonomic scope" value="Eukaryota"/>
</dbReference>
<dbReference type="HOGENOM" id="CLU_088274_2_1_1"/>
<dbReference type="InParanoid" id="P13391"/>
<dbReference type="Proteomes" id="UP000005207">
    <property type="component" value="Unplaced"/>
</dbReference>
<dbReference type="GO" id="GO:0005615">
    <property type="term" value="C:extracellular space"/>
    <property type="evidence" value="ECO:0007669"/>
    <property type="project" value="InterPro"/>
</dbReference>
<dbReference type="GO" id="GO:0070186">
    <property type="term" value="F:growth hormone activity"/>
    <property type="evidence" value="ECO:0007669"/>
    <property type="project" value="TreeGrafter"/>
</dbReference>
<dbReference type="GO" id="GO:0005131">
    <property type="term" value="F:growth hormone receptor binding"/>
    <property type="evidence" value="ECO:0000315"/>
    <property type="project" value="AgBase"/>
</dbReference>
<dbReference type="GO" id="GO:0046872">
    <property type="term" value="F:metal ion binding"/>
    <property type="evidence" value="ECO:0007669"/>
    <property type="project" value="UniProtKB-KW"/>
</dbReference>
<dbReference type="GO" id="GO:0048513">
    <property type="term" value="P:animal organ development"/>
    <property type="evidence" value="ECO:0007669"/>
    <property type="project" value="TreeGrafter"/>
</dbReference>
<dbReference type="GO" id="GO:0060396">
    <property type="term" value="P:growth hormone receptor signaling pathway"/>
    <property type="evidence" value="ECO:0007669"/>
    <property type="project" value="TreeGrafter"/>
</dbReference>
<dbReference type="GO" id="GO:0045927">
    <property type="term" value="P:positive regulation of growth"/>
    <property type="evidence" value="ECO:0007669"/>
    <property type="project" value="TreeGrafter"/>
</dbReference>
<dbReference type="GO" id="GO:0046427">
    <property type="term" value="P:positive regulation of receptor signaling pathway via JAK-STAT"/>
    <property type="evidence" value="ECO:0007669"/>
    <property type="project" value="TreeGrafter"/>
</dbReference>
<dbReference type="GO" id="GO:0031667">
    <property type="term" value="P:response to nutrient levels"/>
    <property type="evidence" value="ECO:0007669"/>
    <property type="project" value="TreeGrafter"/>
</dbReference>
<dbReference type="CDD" id="cd10285">
    <property type="entry name" value="somatotropin_like"/>
    <property type="match status" value="1"/>
</dbReference>
<dbReference type="FunFam" id="1.20.1250.10:FF:000009">
    <property type="entry name" value="Growth hormone"/>
    <property type="match status" value="1"/>
</dbReference>
<dbReference type="Gene3D" id="1.20.1250.10">
    <property type="match status" value="1"/>
</dbReference>
<dbReference type="InterPro" id="IPR009079">
    <property type="entry name" value="4_helix_cytokine-like_core"/>
</dbReference>
<dbReference type="InterPro" id="IPR034975">
    <property type="entry name" value="Somatotropin"/>
</dbReference>
<dbReference type="InterPro" id="IPR001400">
    <property type="entry name" value="Somatotropin/Prolactin"/>
</dbReference>
<dbReference type="InterPro" id="IPR018116">
    <property type="entry name" value="Somatotropin_CS"/>
</dbReference>
<dbReference type="PANTHER" id="PTHR11417:SF2">
    <property type="entry name" value="SOMATOTROPIN"/>
    <property type="match status" value="1"/>
</dbReference>
<dbReference type="PANTHER" id="PTHR11417">
    <property type="entry name" value="SOMATOTROPIN,PROLACTIN"/>
    <property type="match status" value="1"/>
</dbReference>
<dbReference type="Pfam" id="PF00103">
    <property type="entry name" value="Hormone_1"/>
    <property type="match status" value="1"/>
</dbReference>
<dbReference type="PRINTS" id="PR00836">
    <property type="entry name" value="SOMATOTROPIN"/>
</dbReference>
<dbReference type="SUPFAM" id="SSF47266">
    <property type="entry name" value="4-helical cytokines"/>
    <property type="match status" value="1"/>
</dbReference>
<dbReference type="PROSITE" id="PS00266">
    <property type="entry name" value="SOMATOTROPIN_1"/>
    <property type="match status" value="1"/>
</dbReference>
<dbReference type="PROSITE" id="PS00338">
    <property type="entry name" value="SOMATOTROPIN_2"/>
    <property type="match status" value="1"/>
</dbReference>
<sequence>MNSVVLLLSVVCLGVSSQQITDSQRLFSIAVNRVTHLHLLAQRLFSDFESSLQTEEQRQLNKIFLQDFCNSDYIISPIDKHETQRSSVLKLLSISYGLVESWEFPSRSLSGGSSLRNQISPRLSELKTGILLLIRANQDEAENYPDTDTLQHAPYGNYYQSLGGNESLRQTYELLACFKKDMHKVETYLTVAKCRLSPEANCTL</sequence>
<keyword id="KW-1015">Disulfide bond</keyword>
<keyword id="KW-0372">Hormone</keyword>
<keyword id="KW-0479">Metal-binding</keyword>
<keyword id="KW-0873">Pyrrolidone carboxylic acid</keyword>
<keyword id="KW-1185">Reference proteome</keyword>
<keyword id="KW-0964">Secreted</keyword>
<keyword id="KW-0732">Signal</keyword>
<keyword id="KW-0862">Zinc</keyword>
<organism>
    <name type="scientific">Oreochromis niloticus</name>
    <name type="common">Nile tilapia</name>
    <name type="synonym">Tilapia nilotica</name>
    <dbReference type="NCBI Taxonomy" id="8128"/>
    <lineage>
        <taxon>Eukaryota</taxon>
        <taxon>Metazoa</taxon>
        <taxon>Chordata</taxon>
        <taxon>Craniata</taxon>
        <taxon>Vertebrata</taxon>
        <taxon>Euteleostomi</taxon>
        <taxon>Actinopterygii</taxon>
        <taxon>Neopterygii</taxon>
        <taxon>Teleostei</taxon>
        <taxon>Neoteleostei</taxon>
        <taxon>Acanthomorphata</taxon>
        <taxon>Ovalentaria</taxon>
        <taxon>Cichlomorphae</taxon>
        <taxon>Cichliformes</taxon>
        <taxon>Cichlidae</taxon>
        <taxon>African cichlids</taxon>
        <taxon>Pseudocrenilabrinae</taxon>
        <taxon>Oreochromini</taxon>
        <taxon>Oreochromis</taxon>
    </lineage>
</organism>
<comment type="function">
    <text>Growth hormone plays an important role in growth control and involved in the regulation of several anabolic processes.</text>
</comment>
<comment type="subcellular location">
    <subcellularLocation>
        <location>Secreted</location>
    </subcellularLocation>
</comment>
<comment type="similarity">
    <text evidence="2">Belongs to the somatotropin/prolactin family.</text>
</comment>
<protein>
    <recommendedName>
        <fullName>Somatotropin</fullName>
    </recommendedName>
    <alternativeName>
        <fullName>Growth hormone</fullName>
    </alternativeName>
</protein>
<feature type="signal peptide" evidence="1">
    <location>
        <begin position="1"/>
        <end position="17"/>
    </location>
</feature>
<feature type="chain" id="PRO_0000033043" description="Somatotropin">
    <location>
        <begin position="18"/>
        <end position="204"/>
    </location>
</feature>
<feature type="binding site" evidence="1">
    <location>
        <position position="36"/>
    </location>
    <ligand>
        <name>Zn(2+)</name>
        <dbReference type="ChEBI" id="CHEBI:29105"/>
    </ligand>
</feature>
<feature type="binding site" evidence="1">
    <location>
        <position position="186"/>
    </location>
    <ligand>
        <name>Zn(2+)</name>
        <dbReference type="ChEBI" id="CHEBI:29105"/>
    </ligand>
</feature>
<feature type="modified residue" description="Pyrrolidone carboxylic acid" evidence="1">
    <location>
        <position position="18"/>
    </location>
</feature>
<feature type="disulfide bond" evidence="1">
    <location>
        <begin position="69"/>
        <end position="177"/>
    </location>
</feature>
<feature type="disulfide bond" evidence="1">
    <location>
        <begin position="194"/>
        <end position="202"/>
    </location>
</feature>
<name>SOMA_ORENI</name>
<proteinExistence type="evidence at transcript level"/>